<comment type="function">
    <text evidence="1">Allows the formation of correctly charged Gln-tRNA(Gln) through the transamidation of misacylated Glu-tRNA(Gln) in organisms which lack glutaminyl-tRNA synthetase. The reaction takes place in the presence of glutamine and ATP through an activated gamma-phospho-Glu-tRNA(Gln) (By similarity).</text>
</comment>
<comment type="catalytic activity">
    <reaction>
        <text>L-glutamyl-tRNA(Gln) + L-glutamine + ATP + H2O = L-glutaminyl-tRNA(Gln) + L-glutamate + ADP + phosphate + H(+)</text>
        <dbReference type="Rhea" id="RHEA:17521"/>
        <dbReference type="Rhea" id="RHEA-COMP:9681"/>
        <dbReference type="Rhea" id="RHEA-COMP:9684"/>
        <dbReference type="ChEBI" id="CHEBI:15377"/>
        <dbReference type="ChEBI" id="CHEBI:15378"/>
        <dbReference type="ChEBI" id="CHEBI:29985"/>
        <dbReference type="ChEBI" id="CHEBI:30616"/>
        <dbReference type="ChEBI" id="CHEBI:43474"/>
        <dbReference type="ChEBI" id="CHEBI:58359"/>
        <dbReference type="ChEBI" id="CHEBI:78520"/>
        <dbReference type="ChEBI" id="CHEBI:78521"/>
        <dbReference type="ChEBI" id="CHEBI:456216"/>
        <dbReference type="EC" id="6.3.5.7"/>
    </reaction>
</comment>
<comment type="subunit">
    <text evidence="1">Heterotrimer of A, B and C subunits.</text>
</comment>
<comment type="similarity">
    <text evidence="2">Belongs to the amidase family. GatA subfamily.</text>
</comment>
<evidence type="ECO:0000250" key="1"/>
<evidence type="ECO:0000305" key="2"/>
<dbReference type="EC" id="6.3.5.7"/>
<dbReference type="EMBL" id="AE000783">
    <property type="protein sequence ID" value="AAC66715.2"/>
    <property type="molecule type" value="Genomic_DNA"/>
</dbReference>
<dbReference type="PIR" id="E70142">
    <property type="entry name" value="E70142"/>
</dbReference>
<dbReference type="RefSeq" id="NP_212476.2">
    <property type="nucleotide sequence ID" value="NC_001318.1"/>
</dbReference>
<dbReference type="RefSeq" id="WP_010889731.1">
    <property type="nucleotide sequence ID" value="NC_001318.1"/>
</dbReference>
<dbReference type="SMR" id="O51317"/>
<dbReference type="STRING" id="224326.BB_0342"/>
<dbReference type="PaxDb" id="224326-BB_0342"/>
<dbReference type="EnsemblBacteria" id="AAC66715">
    <property type="protein sequence ID" value="AAC66715"/>
    <property type="gene ID" value="BB_0342"/>
</dbReference>
<dbReference type="KEGG" id="bbu:BB_0342"/>
<dbReference type="PATRIC" id="fig|224326.49.peg.738"/>
<dbReference type="HOGENOM" id="CLU_009600_0_3_12"/>
<dbReference type="OrthoDB" id="9811471at2"/>
<dbReference type="Proteomes" id="UP000001807">
    <property type="component" value="Chromosome"/>
</dbReference>
<dbReference type="GO" id="GO:0030956">
    <property type="term" value="C:glutamyl-tRNA(Gln) amidotransferase complex"/>
    <property type="evidence" value="ECO:0007669"/>
    <property type="project" value="InterPro"/>
</dbReference>
<dbReference type="GO" id="GO:0005524">
    <property type="term" value="F:ATP binding"/>
    <property type="evidence" value="ECO:0007669"/>
    <property type="project" value="UniProtKB-KW"/>
</dbReference>
<dbReference type="GO" id="GO:0050567">
    <property type="term" value="F:glutaminyl-tRNA synthase (glutamine-hydrolyzing) activity"/>
    <property type="evidence" value="ECO:0007669"/>
    <property type="project" value="UniProtKB-UniRule"/>
</dbReference>
<dbReference type="GO" id="GO:0006412">
    <property type="term" value="P:translation"/>
    <property type="evidence" value="ECO:0007669"/>
    <property type="project" value="UniProtKB-UniRule"/>
</dbReference>
<dbReference type="Gene3D" id="3.90.1300.10">
    <property type="entry name" value="Amidase signature (AS) domain"/>
    <property type="match status" value="1"/>
</dbReference>
<dbReference type="HAMAP" id="MF_00120">
    <property type="entry name" value="GatA"/>
    <property type="match status" value="1"/>
</dbReference>
<dbReference type="InterPro" id="IPR000120">
    <property type="entry name" value="Amidase"/>
</dbReference>
<dbReference type="InterPro" id="IPR020556">
    <property type="entry name" value="Amidase_CS"/>
</dbReference>
<dbReference type="InterPro" id="IPR023631">
    <property type="entry name" value="Amidase_dom"/>
</dbReference>
<dbReference type="InterPro" id="IPR036928">
    <property type="entry name" value="AS_sf"/>
</dbReference>
<dbReference type="InterPro" id="IPR004412">
    <property type="entry name" value="GatA"/>
</dbReference>
<dbReference type="NCBIfam" id="TIGR00132">
    <property type="entry name" value="gatA"/>
    <property type="match status" value="1"/>
</dbReference>
<dbReference type="PANTHER" id="PTHR11895:SF151">
    <property type="entry name" value="GLUTAMYL-TRNA(GLN) AMIDOTRANSFERASE SUBUNIT A"/>
    <property type="match status" value="1"/>
</dbReference>
<dbReference type="PANTHER" id="PTHR11895">
    <property type="entry name" value="TRANSAMIDASE"/>
    <property type="match status" value="1"/>
</dbReference>
<dbReference type="Pfam" id="PF01425">
    <property type="entry name" value="Amidase"/>
    <property type="match status" value="1"/>
</dbReference>
<dbReference type="SUPFAM" id="SSF75304">
    <property type="entry name" value="Amidase signature (AS) enzymes"/>
    <property type="match status" value="1"/>
</dbReference>
<dbReference type="PROSITE" id="PS00571">
    <property type="entry name" value="AMIDASES"/>
    <property type="match status" value="1"/>
</dbReference>
<name>GATA_BORBU</name>
<protein>
    <recommendedName>
        <fullName>Glutamyl-tRNA(Gln) amidotransferase subunit A</fullName>
        <shortName>Glu-ADT subunit A</shortName>
        <ecNumber>6.3.5.7</ecNumber>
    </recommendedName>
</protein>
<gene>
    <name type="primary">gatA</name>
    <name type="ordered locus">BB_0342</name>
</gene>
<feature type="chain" id="PRO_0000105141" description="Glutamyl-tRNA(Gln) amidotransferase subunit A">
    <location>
        <begin position="1"/>
        <end position="481"/>
    </location>
</feature>
<feature type="active site" description="Charge relay system" evidence="1">
    <location>
        <position position="78"/>
    </location>
</feature>
<feature type="active site" description="Charge relay system" evidence="1">
    <location>
        <position position="153"/>
    </location>
</feature>
<feature type="active site" description="Acyl-ester intermediate" evidence="1">
    <location>
        <position position="177"/>
    </location>
</feature>
<accession>O51317</accession>
<organism>
    <name type="scientific">Borreliella burgdorferi (strain ATCC 35210 / DSM 4680 / CIP 102532 / B31)</name>
    <name type="common">Borrelia burgdorferi</name>
    <dbReference type="NCBI Taxonomy" id="224326"/>
    <lineage>
        <taxon>Bacteria</taxon>
        <taxon>Pseudomonadati</taxon>
        <taxon>Spirochaetota</taxon>
        <taxon>Spirochaetia</taxon>
        <taxon>Spirochaetales</taxon>
        <taxon>Borreliaceae</taxon>
        <taxon>Borreliella</taxon>
    </lineage>
</organism>
<reference key="1">
    <citation type="journal article" date="1997" name="Nature">
        <title>Genomic sequence of a Lyme disease spirochaete, Borrelia burgdorferi.</title>
        <authorList>
            <person name="Fraser C.M."/>
            <person name="Casjens S."/>
            <person name="Huang W.M."/>
            <person name="Sutton G.G."/>
            <person name="Clayton R.A."/>
            <person name="Lathigra R."/>
            <person name="White O."/>
            <person name="Ketchum K.A."/>
            <person name="Dodson R.J."/>
            <person name="Hickey E.K."/>
            <person name="Gwinn M.L."/>
            <person name="Dougherty B.A."/>
            <person name="Tomb J.-F."/>
            <person name="Fleischmann R.D."/>
            <person name="Richardson D.L."/>
            <person name="Peterson J.D."/>
            <person name="Kerlavage A.R."/>
            <person name="Quackenbush J."/>
            <person name="Salzberg S.L."/>
            <person name="Hanson M."/>
            <person name="van Vugt R."/>
            <person name="Palmer N."/>
            <person name="Adams M.D."/>
            <person name="Gocayne J.D."/>
            <person name="Weidman J.F."/>
            <person name="Utterback T.R."/>
            <person name="Watthey L."/>
            <person name="McDonald L.A."/>
            <person name="Artiach P."/>
            <person name="Bowman C."/>
            <person name="Garland S.A."/>
            <person name="Fujii C."/>
            <person name="Cotton M.D."/>
            <person name="Horst K."/>
            <person name="Roberts K.M."/>
            <person name="Hatch B."/>
            <person name="Smith H.O."/>
            <person name="Venter J.C."/>
        </authorList>
    </citation>
    <scope>NUCLEOTIDE SEQUENCE [LARGE SCALE GENOMIC DNA]</scope>
    <source>
        <strain>ATCC 35210 / DSM 4680 / CIP 102532 / B31</strain>
    </source>
</reference>
<proteinExistence type="inferred from homology"/>
<keyword id="KW-0067">ATP-binding</keyword>
<keyword id="KW-0436">Ligase</keyword>
<keyword id="KW-0547">Nucleotide-binding</keyword>
<keyword id="KW-0648">Protein biosynthesis</keyword>
<keyword id="KW-1185">Reference proteome</keyword>
<sequence>MDLSNLTLTKIQELVLTRKCKIYDILLAYKNNYELNKDINGYIEFFDDSLEIAKRYDDCLKNCELEDLPLIGMLIAVKDNISIQDKSLTCASEILKGYISPYDATVIKRLKNKGAILIGRTNMDEFAMGSTCEFSYYGATLNPLNREYVIGGSSGGSAAVVAAFQAPFSLGSDTGGSVRLPASFSGILGFKPSYGGLSRYGLASYASSFDQIGFFSHSIEDIALILKHTCGSDKMDSTSVDIFDDFYPLKIESLQGKNLAVIKELSEDLMDKNVANSFAKFKLDLLSKGINIKEVSIEEINFILSIYYIISPVEASSNLARYTGLCYGKRISEGLSLNDFYFKHRSNFLSEEVKRRIVLGNYLLSERYDSKYYAKACEILQNLIIPKFNKLFESCDFIITPTSFVKPFRLGLDFDDPVKMYYSDICTVIANLIGAPAISLPYSKDEEGLSIGMQIIGRSKKDFELLSFSKNVIRELGLNGI</sequence>